<comment type="function">
    <text evidence="1">PPIases accelerate the folding of proteins. It catalyzes the cis-trans isomerization of proline imidic peptide bonds in oligopeptides (By similarity).</text>
</comment>
<comment type="catalytic activity">
    <reaction>
        <text>[protein]-peptidylproline (omega=180) = [protein]-peptidylproline (omega=0)</text>
        <dbReference type="Rhea" id="RHEA:16237"/>
        <dbReference type="Rhea" id="RHEA-COMP:10747"/>
        <dbReference type="Rhea" id="RHEA-COMP:10748"/>
        <dbReference type="ChEBI" id="CHEBI:83833"/>
        <dbReference type="ChEBI" id="CHEBI:83834"/>
        <dbReference type="EC" id="5.2.1.8"/>
    </reaction>
</comment>
<comment type="activity regulation">
    <text evidence="1">Inhibited by both FK506 and rapamycin.</text>
</comment>
<comment type="subunit">
    <text evidence="1">Interacts with ARFGEF1/BIG1 and the C-terminal of EPB41L2.</text>
</comment>
<comment type="subcellular location">
    <subcellularLocation>
        <location evidence="1">Endoplasmic reticulum membrane</location>
        <topology evidence="1">Peripheral membrane protein</topology>
    </subcellularLocation>
</comment>
<comment type="similarity">
    <text evidence="4">Belongs to the FKBP-type PPIase family. FKBP2 subfamily.</text>
</comment>
<dbReference type="EC" id="5.2.1.8"/>
<dbReference type="EMBL" id="BC108190">
    <property type="protein sequence ID" value="AAI08191.1"/>
    <property type="molecule type" value="mRNA"/>
</dbReference>
<dbReference type="RefSeq" id="NP_001032558.1">
    <property type="nucleotide sequence ID" value="NM_001037481.1"/>
</dbReference>
<dbReference type="RefSeq" id="XP_005227204.1">
    <property type="nucleotide sequence ID" value="XM_005227147.5"/>
</dbReference>
<dbReference type="RefSeq" id="XP_005227205.1">
    <property type="nucleotide sequence ID" value="XM_005227148.5"/>
</dbReference>
<dbReference type="SMR" id="Q32PA9"/>
<dbReference type="FunCoup" id="Q32PA9">
    <property type="interactions" value="2129"/>
</dbReference>
<dbReference type="STRING" id="9913.ENSBTAP00000049150"/>
<dbReference type="PaxDb" id="9913-ENSBTAP00000018091"/>
<dbReference type="PeptideAtlas" id="Q32PA9"/>
<dbReference type="GeneID" id="538998"/>
<dbReference type="KEGG" id="bta:538998"/>
<dbReference type="CTD" id="2286"/>
<dbReference type="eggNOG" id="KOG0549">
    <property type="taxonomic scope" value="Eukaryota"/>
</dbReference>
<dbReference type="HOGENOM" id="CLU_013615_8_2_1"/>
<dbReference type="InParanoid" id="Q32PA9"/>
<dbReference type="OrthoDB" id="77911at2759"/>
<dbReference type="Proteomes" id="UP000009136">
    <property type="component" value="Unplaced"/>
</dbReference>
<dbReference type="GO" id="GO:0005783">
    <property type="term" value="C:endoplasmic reticulum"/>
    <property type="evidence" value="ECO:0000318"/>
    <property type="project" value="GO_Central"/>
</dbReference>
<dbReference type="GO" id="GO:0005789">
    <property type="term" value="C:endoplasmic reticulum membrane"/>
    <property type="evidence" value="ECO:0007669"/>
    <property type="project" value="UniProtKB-SubCell"/>
</dbReference>
<dbReference type="GO" id="GO:0003755">
    <property type="term" value="F:peptidyl-prolyl cis-trans isomerase activity"/>
    <property type="evidence" value="ECO:0000318"/>
    <property type="project" value="GO_Central"/>
</dbReference>
<dbReference type="GO" id="GO:0061077">
    <property type="term" value="P:chaperone-mediated protein folding"/>
    <property type="evidence" value="ECO:0007669"/>
    <property type="project" value="InterPro"/>
</dbReference>
<dbReference type="FunFam" id="3.10.50.40:FF:000016">
    <property type="entry name" value="Peptidylprolyl isomerase"/>
    <property type="match status" value="1"/>
</dbReference>
<dbReference type="Gene3D" id="3.10.50.40">
    <property type="match status" value="1"/>
</dbReference>
<dbReference type="InterPro" id="IPR044609">
    <property type="entry name" value="FKBP2/11"/>
</dbReference>
<dbReference type="InterPro" id="IPR046357">
    <property type="entry name" value="PPIase_dom_sf"/>
</dbReference>
<dbReference type="InterPro" id="IPR001179">
    <property type="entry name" value="PPIase_FKBP_dom"/>
</dbReference>
<dbReference type="PANTHER" id="PTHR45779:SF3">
    <property type="entry name" value="PEPTIDYL-PROLYL CIS-TRANS ISOMERASE FKBP2"/>
    <property type="match status" value="1"/>
</dbReference>
<dbReference type="PANTHER" id="PTHR45779">
    <property type="entry name" value="PEPTIDYLPROLYL ISOMERASE"/>
    <property type="match status" value="1"/>
</dbReference>
<dbReference type="Pfam" id="PF00254">
    <property type="entry name" value="FKBP_C"/>
    <property type="match status" value="1"/>
</dbReference>
<dbReference type="SUPFAM" id="SSF54534">
    <property type="entry name" value="FKBP-like"/>
    <property type="match status" value="1"/>
</dbReference>
<dbReference type="PROSITE" id="PS50059">
    <property type="entry name" value="FKBP_PPIASE"/>
    <property type="match status" value="1"/>
</dbReference>
<feature type="signal peptide" evidence="2">
    <location>
        <begin position="1"/>
        <end position="20"/>
    </location>
</feature>
<feature type="chain" id="PRO_0000285596" description="Peptidyl-prolyl cis-trans isomerase FKBP2">
    <location>
        <begin position="21"/>
        <end position="140"/>
    </location>
</feature>
<feature type="domain" description="PPIase FKBP-type" evidence="3">
    <location>
        <begin position="47"/>
        <end position="135"/>
    </location>
</feature>
<organism>
    <name type="scientific">Bos taurus</name>
    <name type="common">Bovine</name>
    <dbReference type="NCBI Taxonomy" id="9913"/>
    <lineage>
        <taxon>Eukaryota</taxon>
        <taxon>Metazoa</taxon>
        <taxon>Chordata</taxon>
        <taxon>Craniata</taxon>
        <taxon>Vertebrata</taxon>
        <taxon>Euteleostomi</taxon>
        <taxon>Mammalia</taxon>
        <taxon>Eutheria</taxon>
        <taxon>Laurasiatheria</taxon>
        <taxon>Artiodactyla</taxon>
        <taxon>Ruminantia</taxon>
        <taxon>Pecora</taxon>
        <taxon>Bovidae</taxon>
        <taxon>Bovinae</taxon>
        <taxon>Bos</taxon>
    </lineage>
</organism>
<proteinExistence type="evidence at transcript level"/>
<name>FKBP2_BOVIN</name>
<protein>
    <recommendedName>
        <fullName>Peptidyl-prolyl cis-trans isomerase FKBP2</fullName>
        <shortName>PPIase FKBP2</shortName>
        <ecNumber>5.2.1.8</ecNumber>
    </recommendedName>
    <alternativeName>
        <fullName>FK506-binding protein 2</fullName>
        <shortName>FKBP-2</shortName>
    </alternativeName>
    <alternativeName>
        <fullName>Rotamase</fullName>
    </alternativeName>
</protein>
<evidence type="ECO:0000250" key="1"/>
<evidence type="ECO:0000255" key="2"/>
<evidence type="ECO:0000255" key="3">
    <source>
        <dbReference type="PROSITE-ProRule" id="PRU00277"/>
    </source>
</evidence>
<evidence type="ECO:0000305" key="4"/>
<reference key="1">
    <citation type="submission" date="2005-10" db="EMBL/GenBank/DDBJ databases">
        <authorList>
            <consortium name="NIH - Mammalian Gene Collection (MGC) project"/>
        </authorList>
    </citation>
    <scope>NUCLEOTIDE SEQUENCE [LARGE SCALE MRNA]</scope>
    <source>
        <strain>Crossbred X Angus</strain>
        <tissue>Liver</tissue>
    </source>
</reference>
<accession>Q32PA9</accession>
<sequence length="140" mass="15404">MRLSWVLTVLSICLSALVTATGTEGKRKLQIGVKKRVDHCPIKSRKGDVLHMHYTGKLEDGTEFDSSLPQNQPFVFSLGTGQVIKGWDQGLLGMCEGEKRKLVIPSELGYGERGAPPKIPGGATLVFEVELLKIERRSEL</sequence>
<gene>
    <name type="primary">FKBP2</name>
</gene>
<keyword id="KW-0256">Endoplasmic reticulum</keyword>
<keyword id="KW-0413">Isomerase</keyword>
<keyword id="KW-0472">Membrane</keyword>
<keyword id="KW-1185">Reference proteome</keyword>
<keyword id="KW-0697">Rotamase</keyword>
<keyword id="KW-0732">Signal</keyword>